<keyword id="KW-0963">Cytoplasm</keyword>
<keyword id="KW-0413">Isomerase</keyword>
<keyword id="KW-0627">Porphyrin biosynthesis</keyword>
<keyword id="KW-0663">Pyridoxal phosphate</keyword>
<keyword id="KW-1185">Reference proteome</keyword>
<evidence type="ECO:0000255" key="1">
    <source>
        <dbReference type="HAMAP-Rule" id="MF_00375"/>
    </source>
</evidence>
<dbReference type="EC" id="5.4.3.8" evidence="1"/>
<dbReference type="EMBL" id="CP000447">
    <property type="protein sequence ID" value="ABI72819.1"/>
    <property type="molecule type" value="Genomic_DNA"/>
</dbReference>
<dbReference type="RefSeq" id="WP_011638428.1">
    <property type="nucleotide sequence ID" value="NC_008345.1"/>
</dbReference>
<dbReference type="SMR" id="Q07YU5"/>
<dbReference type="STRING" id="318167.Sfri_2980"/>
<dbReference type="KEGG" id="sfr:Sfri_2980"/>
<dbReference type="eggNOG" id="COG0001">
    <property type="taxonomic scope" value="Bacteria"/>
</dbReference>
<dbReference type="HOGENOM" id="CLU_016922_1_5_6"/>
<dbReference type="OrthoDB" id="9801052at2"/>
<dbReference type="UniPathway" id="UPA00251">
    <property type="reaction ID" value="UER00317"/>
</dbReference>
<dbReference type="Proteomes" id="UP000000684">
    <property type="component" value="Chromosome"/>
</dbReference>
<dbReference type="GO" id="GO:0005737">
    <property type="term" value="C:cytoplasm"/>
    <property type="evidence" value="ECO:0007669"/>
    <property type="project" value="UniProtKB-SubCell"/>
</dbReference>
<dbReference type="GO" id="GO:0042286">
    <property type="term" value="F:glutamate-1-semialdehyde 2,1-aminomutase activity"/>
    <property type="evidence" value="ECO:0007669"/>
    <property type="project" value="UniProtKB-UniRule"/>
</dbReference>
<dbReference type="GO" id="GO:0030170">
    <property type="term" value="F:pyridoxal phosphate binding"/>
    <property type="evidence" value="ECO:0007669"/>
    <property type="project" value="InterPro"/>
</dbReference>
<dbReference type="GO" id="GO:0008483">
    <property type="term" value="F:transaminase activity"/>
    <property type="evidence" value="ECO:0007669"/>
    <property type="project" value="InterPro"/>
</dbReference>
<dbReference type="GO" id="GO:0006782">
    <property type="term" value="P:protoporphyrinogen IX biosynthetic process"/>
    <property type="evidence" value="ECO:0007669"/>
    <property type="project" value="UniProtKB-UniRule"/>
</dbReference>
<dbReference type="CDD" id="cd00610">
    <property type="entry name" value="OAT_like"/>
    <property type="match status" value="1"/>
</dbReference>
<dbReference type="FunFam" id="3.40.640.10:FF:000021">
    <property type="entry name" value="Glutamate-1-semialdehyde 2,1-aminomutase"/>
    <property type="match status" value="1"/>
</dbReference>
<dbReference type="Gene3D" id="3.90.1150.10">
    <property type="entry name" value="Aspartate Aminotransferase, domain 1"/>
    <property type="match status" value="1"/>
</dbReference>
<dbReference type="Gene3D" id="3.40.640.10">
    <property type="entry name" value="Type I PLP-dependent aspartate aminotransferase-like (Major domain)"/>
    <property type="match status" value="1"/>
</dbReference>
<dbReference type="HAMAP" id="MF_00375">
    <property type="entry name" value="HemL_aminotrans_3"/>
    <property type="match status" value="1"/>
</dbReference>
<dbReference type="InterPro" id="IPR004639">
    <property type="entry name" value="4pyrrol_synth_GluAld_NH2Trfase"/>
</dbReference>
<dbReference type="InterPro" id="IPR005814">
    <property type="entry name" value="Aminotrans_3"/>
</dbReference>
<dbReference type="InterPro" id="IPR049704">
    <property type="entry name" value="Aminotrans_3_PPA_site"/>
</dbReference>
<dbReference type="InterPro" id="IPR015424">
    <property type="entry name" value="PyrdxlP-dep_Trfase"/>
</dbReference>
<dbReference type="InterPro" id="IPR015421">
    <property type="entry name" value="PyrdxlP-dep_Trfase_major"/>
</dbReference>
<dbReference type="InterPro" id="IPR015422">
    <property type="entry name" value="PyrdxlP-dep_Trfase_small"/>
</dbReference>
<dbReference type="NCBIfam" id="TIGR00713">
    <property type="entry name" value="hemL"/>
    <property type="match status" value="1"/>
</dbReference>
<dbReference type="NCBIfam" id="NF000818">
    <property type="entry name" value="PRK00062.1"/>
    <property type="match status" value="1"/>
</dbReference>
<dbReference type="PANTHER" id="PTHR43713">
    <property type="entry name" value="GLUTAMATE-1-SEMIALDEHYDE 2,1-AMINOMUTASE"/>
    <property type="match status" value="1"/>
</dbReference>
<dbReference type="PANTHER" id="PTHR43713:SF3">
    <property type="entry name" value="GLUTAMATE-1-SEMIALDEHYDE 2,1-AMINOMUTASE 1, CHLOROPLASTIC-RELATED"/>
    <property type="match status" value="1"/>
</dbReference>
<dbReference type="Pfam" id="PF00202">
    <property type="entry name" value="Aminotran_3"/>
    <property type="match status" value="1"/>
</dbReference>
<dbReference type="SUPFAM" id="SSF53383">
    <property type="entry name" value="PLP-dependent transferases"/>
    <property type="match status" value="1"/>
</dbReference>
<dbReference type="PROSITE" id="PS00600">
    <property type="entry name" value="AA_TRANSFER_CLASS_3"/>
    <property type="match status" value="1"/>
</dbReference>
<protein>
    <recommendedName>
        <fullName evidence="1">Glutamate-1-semialdehyde 2,1-aminomutase</fullName>
        <shortName evidence="1">GSA</shortName>
        <ecNumber evidence="1">5.4.3.8</ecNumber>
    </recommendedName>
    <alternativeName>
        <fullName evidence="1">Glutamate-1-semialdehyde aminotransferase</fullName>
        <shortName evidence="1">GSA-AT</shortName>
    </alternativeName>
</protein>
<gene>
    <name evidence="1" type="primary">hemL</name>
    <name type="ordered locus">Sfri_2980</name>
</gene>
<accession>Q07YU5</accession>
<reference key="1">
    <citation type="submission" date="2006-08" db="EMBL/GenBank/DDBJ databases">
        <title>Complete sequence of Shewanella frigidimarina NCIMB 400.</title>
        <authorList>
            <consortium name="US DOE Joint Genome Institute"/>
            <person name="Copeland A."/>
            <person name="Lucas S."/>
            <person name="Lapidus A."/>
            <person name="Barry K."/>
            <person name="Detter J.C."/>
            <person name="Glavina del Rio T."/>
            <person name="Hammon N."/>
            <person name="Israni S."/>
            <person name="Dalin E."/>
            <person name="Tice H."/>
            <person name="Pitluck S."/>
            <person name="Fredrickson J.K."/>
            <person name="Kolker E."/>
            <person name="McCuel L.A."/>
            <person name="DiChristina T."/>
            <person name="Nealson K.H."/>
            <person name="Newman D."/>
            <person name="Tiedje J.M."/>
            <person name="Zhou J."/>
            <person name="Romine M.F."/>
            <person name="Culley D.E."/>
            <person name="Serres M."/>
            <person name="Chertkov O."/>
            <person name="Brettin T."/>
            <person name="Bruce D."/>
            <person name="Han C."/>
            <person name="Tapia R."/>
            <person name="Gilna P."/>
            <person name="Schmutz J."/>
            <person name="Larimer F."/>
            <person name="Land M."/>
            <person name="Hauser L."/>
            <person name="Kyrpides N."/>
            <person name="Mikhailova N."/>
            <person name="Richardson P."/>
        </authorList>
    </citation>
    <scope>NUCLEOTIDE SEQUENCE [LARGE SCALE GENOMIC DNA]</scope>
    <source>
        <strain>NCIMB 400</strain>
    </source>
</reference>
<feature type="chain" id="PRO_0000300946" description="Glutamate-1-semialdehyde 2,1-aminomutase">
    <location>
        <begin position="1"/>
        <end position="428"/>
    </location>
</feature>
<feature type="modified residue" description="N6-(pyridoxal phosphate)lysine" evidence="1">
    <location>
        <position position="265"/>
    </location>
</feature>
<proteinExistence type="inferred from homology"/>
<sequence length="428" mass="45812">MTRSEVLFEQAKKTIPGGVNSPVRAFNGVGGSPLFIEKADGAYIFDADGKKYIDYVGSWGPMILGHNHPKIRQAVLDAVDNGLSFGAPTELEVKMAEKVISMVPSIEQVRMVSSGTEATMSAIRLARGFTNRDNILKFEGCYHGHADCLLVKAGSGALTLGQPSSPGIPEDFAKHTLTATYNDLDSVRAIFEQNPESIACIILEPVAGNMNCIPPVEGFLQGLRTICDEFGALLIIDEVMTGFRVSMSGAQGHYGVTPDLTTLGKVIGGGMPVGAFGGRKDVMQFIAPTGPVYQAGTLSGNPIAMSAGLAQMDALCEPGLYEALADKTKRVAEGFKAAADKHGIPLNITYVGGMFGFFFTEDNTPMTSFAQVTKCNMEHFRHFYHAMLDEGIYLAPSAYEAGFMSMAHGDAEIEYTLAAVDRIFAAMK</sequence>
<organism>
    <name type="scientific">Shewanella frigidimarina (strain NCIMB 400)</name>
    <dbReference type="NCBI Taxonomy" id="318167"/>
    <lineage>
        <taxon>Bacteria</taxon>
        <taxon>Pseudomonadati</taxon>
        <taxon>Pseudomonadota</taxon>
        <taxon>Gammaproteobacteria</taxon>
        <taxon>Alteromonadales</taxon>
        <taxon>Shewanellaceae</taxon>
        <taxon>Shewanella</taxon>
    </lineage>
</organism>
<comment type="catalytic activity">
    <reaction evidence="1">
        <text>(S)-4-amino-5-oxopentanoate = 5-aminolevulinate</text>
        <dbReference type="Rhea" id="RHEA:14265"/>
        <dbReference type="ChEBI" id="CHEBI:57501"/>
        <dbReference type="ChEBI" id="CHEBI:356416"/>
        <dbReference type="EC" id="5.4.3.8"/>
    </reaction>
</comment>
<comment type="cofactor">
    <cofactor evidence="1">
        <name>pyridoxal 5'-phosphate</name>
        <dbReference type="ChEBI" id="CHEBI:597326"/>
    </cofactor>
</comment>
<comment type="pathway">
    <text evidence="1">Porphyrin-containing compound metabolism; protoporphyrin-IX biosynthesis; 5-aminolevulinate from L-glutamyl-tRNA(Glu): step 2/2.</text>
</comment>
<comment type="subunit">
    <text evidence="1">Homodimer.</text>
</comment>
<comment type="subcellular location">
    <subcellularLocation>
        <location evidence="1">Cytoplasm</location>
    </subcellularLocation>
</comment>
<comment type="similarity">
    <text evidence="1">Belongs to the class-III pyridoxal-phosphate-dependent aminotransferase family. HemL subfamily.</text>
</comment>
<name>GSA_SHEFN</name>